<sequence>MTKFRGCIDIHSGQVKQIVGGTLTQDDSASSKTSSAKENFVSTKPSSHYAQLYKDYNVKGCHVIKLGSNPANDDAAKLALSTWPHNLQVGGGINLDNAQYWLDQGASHVILTSWLFTKNEQDKMELDFGKLREISKLIGKEKLIVDLSCRTVIENGKTNWYVAMNKWQTITDTILSAEFLLKVSAYCDEFLIHAADVEGLCKGIDEKLVENLGEWCPVGFEEKIVYAGGAKSINDLDTVAKLSKGKVDLTYGSSLDIFSGKLVNFTDLVEWNKANSKTN</sequence>
<gene>
    <name type="primary">HIS6</name>
</gene>
<proteinExistence type="inferred from homology"/>
<name>HIS4_CANAX</name>
<comment type="catalytic activity">
    <reaction>
        <text>1-(5-phospho-beta-D-ribosyl)-5-[(5-phospho-beta-D-ribosylamino)methylideneamino]imidazole-4-carboxamide = 5-[(5-phospho-1-deoxy-D-ribulos-1-ylimino)methylamino]-1-(5-phospho-beta-D-ribosyl)imidazole-4-carboxamide</text>
        <dbReference type="Rhea" id="RHEA:15469"/>
        <dbReference type="ChEBI" id="CHEBI:58435"/>
        <dbReference type="ChEBI" id="CHEBI:58525"/>
        <dbReference type="EC" id="5.3.1.16"/>
    </reaction>
</comment>
<comment type="pathway">
    <text>Amino-acid biosynthesis; L-histidine biosynthesis; L-histidine from 5-phospho-alpha-D-ribose 1-diphosphate: step 4/9.</text>
</comment>
<comment type="subcellular location">
    <subcellularLocation>
        <location evidence="1">Cytoplasm</location>
    </subcellularLocation>
</comment>
<comment type="similarity">
    <text evidence="2">Belongs to the HisA/HisF family.</text>
</comment>
<evidence type="ECO:0000250" key="1"/>
<evidence type="ECO:0000305" key="2"/>
<feature type="chain" id="PRO_0000141956" description="1-(5-phosphoribosyl)-5-[(5-phosphoribosylamino)methylideneamino] imidazole-4-carboxamide isomerase">
    <location>
        <begin position="1"/>
        <end position="279"/>
    </location>
</feature>
<dbReference type="EC" id="5.3.1.16"/>
<dbReference type="EMBL" id="AF290199">
    <property type="protein sequence ID" value="AAG17873.1"/>
    <property type="molecule type" value="Genomic_DNA"/>
</dbReference>
<dbReference type="SMR" id="Q9HFV5"/>
<dbReference type="CGD" id="CAL0000175514">
    <property type="gene designation" value="orf19.8833"/>
</dbReference>
<dbReference type="VEuPathDB" id="FungiDB:C4_05640C_A"/>
<dbReference type="VEuPathDB" id="FungiDB:CAWG_03258"/>
<dbReference type="UniPathway" id="UPA00031">
    <property type="reaction ID" value="UER00009"/>
</dbReference>
<dbReference type="GO" id="GO:0005737">
    <property type="term" value="C:cytoplasm"/>
    <property type="evidence" value="ECO:0007669"/>
    <property type="project" value="UniProtKB-SubCell"/>
</dbReference>
<dbReference type="GO" id="GO:0003949">
    <property type="term" value="F:1-(5-phosphoribosyl)-5-[(5-phosphoribosylamino)methylideneamino]imidazole-4-carboxamide isomerase activity"/>
    <property type="evidence" value="ECO:0007669"/>
    <property type="project" value="UniProtKB-EC"/>
</dbReference>
<dbReference type="GO" id="GO:0000105">
    <property type="term" value="P:L-histidine biosynthetic process"/>
    <property type="evidence" value="ECO:0007669"/>
    <property type="project" value="UniProtKB-UniPathway"/>
</dbReference>
<dbReference type="GO" id="GO:0000162">
    <property type="term" value="P:L-tryptophan biosynthetic process"/>
    <property type="evidence" value="ECO:0007669"/>
    <property type="project" value="TreeGrafter"/>
</dbReference>
<dbReference type="CDD" id="cd04723">
    <property type="entry name" value="HisA_HisF"/>
    <property type="match status" value="1"/>
</dbReference>
<dbReference type="FunFam" id="3.20.20.70:FF:000110">
    <property type="entry name" value="1-(5-phosphoribosyl)-5-[(5-phosphoribosylamino)methylideneamino] imidazole-4-carboxamide isomerase, chloroplastic"/>
    <property type="match status" value="1"/>
</dbReference>
<dbReference type="Gene3D" id="3.20.20.70">
    <property type="entry name" value="Aldolase class I"/>
    <property type="match status" value="1"/>
</dbReference>
<dbReference type="InterPro" id="IPR013785">
    <property type="entry name" value="Aldolase_TIM"/>
</dbReference>
<dbReference type="InterPro" id="IPR011858">
    <property type="entry name" value="His6-like_euk"/>
</dbReference>
<dbReference type="InterPro" id="IPR006062">
    <property type="entry name" value="His_biosynth"/>
</dbReference>
<dbReference type="InterPro" id="IPR044524">
    <property type="entry name" value="Isoase_HisA-like"/>
</dbReference>
<dbReference type="InterPro" id="IPR011060">
    <property type="entry name" value="RibuloseP-bd_barrel"/>
</dbReference>
<dbReference type="NCBIfam" id="TIGR02129">
    <property type="entry name" value="hisA_euk"/>
    <property type="match status" value="1"/>
</dbReference>
<dbReference type="PANTHER" id="PTHR43090">
    <property type="entry name" value="1-(5-PHOSPHORIBOSYL)-5-[(5-PHOSPHORIBOSYLAMINO)METHYLIDENEAMINO] IMIDAZOLE-4-CARBOXAMIDE ISOMERASE"/>
    <property type="match status" value="1"/>
</dbReference>
<dbReference type="PANTHER" id="PTHR43090:SF2">
    <property type="entry name" value="1-(5-PHOSPHORIBOSYL)-5-[(5-PHOSPHORIBOSYLAMINO)METHYLIDENEAMINO] IMIDAZOLE-4-CARBOXAMIDE ISOMERASE"/>
    <property type="match status" value="1"/>
</dbReference>
<dbReference type="Pfam" id="PF00977">
    <property type="entry name" value="His_biosynth"/>
    <property type="match status" value="1"/>
</dbReference>
<dbReference type="SUPFAM" id="SSF51366">
    <property type="entry name" value="Ribulose-phoshate binding barrel"/>
    <property type="match status" value="1"/>
</dbReference>
<reference key="1">
    <citation type="submission" date="2000-07" db="EMBL/GenBank/DDBJ databases">
        <title>Cloning and characterization of the CaHIS6 and CaHIS7 genes from the fungal pathogen Candida albicans.</title>
        <authorList>
            <person name="Day T.W."/>
            <person name="Davisson V.J."/>
        </authorList>
    </citation>
    <scope>NUCLEOTIDE SEQUENCE [GENOMIC DNA]</scope>
</reference>
<protein>
    <recommendedName>
        <fullName>1-(5-phosphoribosyl)-5-[(5-phosphoribosylamino)methylideneamino] imidazole-4-carboxamide isomerase</fullName>
        <ecNumber>5.3.1.16</ecNumber>
    </recommendedName>
    <alternativeName>
        <fullName>5-proFAR isomerase</fullName>
    </alternativeName>
    <alternativeName>
        <fullName>Phosphoribosylformimino-5-aminoimidazole carboxamide ribotide isomerase</fullName>
    </alternativeName>
</protein>
<keyword id="KW-0028">Amino-acid biosynthesis</keyword>
<keyword id="KW-0963">Cytoplasm</keyword>
<keyword id="KW-0368">Histidine biosynthesis</keyword>
<keyword id="KW-0413">Isomerase</keyword>
<organism>
    <name type="scientific">Candida albicans</name>
    <name type="common">Yeast</name>
    <dbReference type="NCBI Taxonomy" id="5476"/>
    <lineage>
        <taxon>Eukaryota</taxon>
        <taxon>Fungi</taxon>
        <taxon>Dikarya</taxon>
        <taxon>Ascomycota</taxon>
        <taxon>Saccharomycotina</taxon>
        <taxon>Pichiomycetes</taxon>
        <taxon>Debaryomycetaceae</taxon>
        <taxon>Candida/Lodderomyces clade</taxon>
        <taxon>Candida</taxon>
    </lineage>
</organism>
<accession>Q9HFV5</accession>